<reference key="1">
    <citation type="journal article" date="2008" name="J. Bacteriol.">
        <title>The pangenome structure of Escherichia coli: comparative genomic analysis of E. coli commensal and pathogenic isolates.</title>
        <authorList>
            <person name="Rasko D.A."/>
            <person name="Rosovitz M.J."/>
            <person name="Myers G.S.A."/>
            <person name="Mongodin E.F."/>
            <person name="Fricke W.F."/>
            <person name="Gajer P."/>
            <person name="Crabtree J."/>
            <person name="Sebaihia M."/>
            <person name="Thomson N.R."/>
            <person name="Chaudhuri R."/>
            <person name="Henderson I.R."/>
            <person name="Sperandio V."/>
            <person name="Ravel J."/>
        </authorList>
    </citation>
    <scope>NUCLEOTIDE SEQUENCE [LARGE SCALE GENOMIC DNA]</scope>
    <source>
        <strain>E24377A / ETEC</strain>
    </source>
</reference>
<proteinExistence type="inferred from homology"/>
<organism>
    <name type="scientific">Escherichia coli O139:H28 (strain E24377A / ETEC)</name>
    <dbReference type="NCBI Taxonomy" id="331111"/>
    <lineage>
        <taxon>Bacteria</taxon>
        <taxon>Pseudomonadati</taxon>
        <taxon>Pseudomonadota</taxon>
        <taxon>Gammaproteobacteria</taxon>
        <taxon>Enterobacterales</taxon>
        <taxon>Enterobacteriaceae</taxon>
        <taxon>Escherichia</taxon>
    </lineage>
</organism>
<comment type="function">
    <text evidence="1">Specifically catalyzes the cleavage of the D-lactyl ether substituent of MurNAc 6-phosphate, producing GlcNAc 6-phosphate and D-lactate. Together with AnmK, is also required for the utilization of anhydro-N-acetylmuramic acid (anhMurNAc) either imported from the medium or derived from its own cell wall murein, and thus plays a role in cell wall recycling.</text>
</comment>
<comment type="catalytic activity">
    <reaction evidence="1">
        <text>N-acetyl-D-muramate 6-phosphate + H2O = N-acetyl-D-glucosamine 6-phosphate + (R)-lactate</text>
        <dbReference type="Rhea" id="RHEA:26410"/>
        <dbReference type="ChEBI" id="CHEBI:15377"/>
        <dbReference type="ChEBI" id="CHEBI:16004"/>
        <dbReference type="ChEBI" id="CHEBI:57513"/>
        <dbReference type="ChEBI" id="CHEBI:58722"/>
        <dbReference type="EC" id="4.2.1.126"/>
    </reaction>
</comment>
<comment type="pathway">
    <text evidence="1">Amino-sugar metabolism; 1,6-anhydro-N-acetylmuramate degradation.</text>
</comment>
<comment type="pathway">
    <text evidence="1">Amino-sugar metabolism; N-acetylmuramate degradation.</text>
</comment>
<comment type="pathway">
    <text evidence="1">Cell wall biogenesis; peptidoglycan recycling.</text>
</comment>
<comment type="subunit">
    <text evidence="1">Homodimer.</text>
</comment>
<comment type="induction">
    <text evidence="1">Induced by MurNAc 6-phosphate that releases the repressor MurR from the DNA. Repressed by MurR in the absence of MurNAc 6-phosphate.</text>
</comment>
<comment type="miscellaneous">
    <text evidence="1">A lyase-type mechanism (elimination/hydration) is suggested for the cleavage of the lactyl ether bond of MurNAc 6-phosphate, with the formation of an alpha,beta-unsaturated aldehyde intermediate with (E)-stereochemistry, followed by the syn addition of water to give product.</text>
</comment>
<comment type="similarity">
    <text evidence="1">Belongs to the GCKR-like family. MurNAc-6-P etherase subfamily.</text>
</comment>
<accession>A7ZPM8</accession>
<gene>
    <name evidence="1" type="primary">murQ</name>
    <name type="ordered locus">EcE24377A_2714</name>
</gene>
<sequence>MQLEKMITEGSNTASAEIDRVSTLEMCRIINDEDKTVPLAVERVLPDIAAAIDVIHAQVSGGGRLIYLGAGTSGRLGILDASECPPTYGVKPGLVVGLIAGGEYAIQHAVEGAEDSREGGVNDLKNINLTAQDVVVGIAASGRTPYVIAGLEYARQLGCRTVGISCNPGSAVSTTAEFAITPIVGAEVVTGSSRMKAGTAQKLVLNMLSTGLMIKSGKVFGNLMVDVVATNEKLHVRQVNIVKNATGCNAEQAEAALIACERNCKTAIVMVLKNLDAAEAKKRLDQHGGFIRQVLDKE</sequence>
<evidence type="ECO:0000255" key="1">
    <source>
        <dbReference type="HAMAP-Rule" id="MF_00068"/>
    </source>
</evidence>
<name>MURQ_ECO24</name>
<dbReference type="EC" id="4.2.1.126" evidence="1"/>
<dbReference type="EMBL" id="CP000800">
    <property type="protein sequence ID" value="ABV16877.1"/>
    <property type="molecule type" value="Genomic_DNA"/>
</dbReference>
<dbReference type="RefSeq" id="WP_001175648.1">
    <property type="nucleotide sequence ID" value="NC_009801.1"/>
</dbReference>
<dbReference type="SMR" id="A7ZPM8"/>
<dbReference type="KEGG" id="ecw:EcE24377A_2714"/>
<dbReference type="HOGENOM" id="CLU_049049_1_1_6"/>
<dbReference type="UniPathway" id="UPA00342"/>
<dbReference type="UniPathway" id="UPA00343"/>
<dbReference type="UniPathway" id="UPA00544"/>
<dbReference type="Proteomes" id="UP000001122">
    <property type="component" value="Chromosome"/>
</dbReference>
<dbReference type="GO" id="GO:0097367">
    <property type="term" value="F:carbohydrate derivative binding"/>
    <property type="evidence" value="ECO:0007669"/>
    <property type="project" value="InterPro"/>
</dbReference>
<dbReference type="GO" id="GO:0016835">
    <property type="term" value="F:carbon-oxygen lyase activity"/>
    <property type="evidence" value="ECO:0007669"/>
    <property type="project" value="UniProtKB-UniRule"/>
</dbReference>
<dbReference type="GO" id="GO:0016803">
    <property type="term" value="F:ether hydrolase activity"/>
    <property type="evidence" value="ECO:0007669"/>
    <property type="project" value="TreeGrafter"/>
</dbReference>
<dbReference type="GO" id="GO:0097175">
    <property type="term" value="P:1,6-anhydro-N-acetyl-beta-muramic acid catabolic process"/>
    <property type="evidence" value="ECO:0007669"/>
    <property type="project" value="UniProtKB-UniRule"/>
</dbReference>
<dbReference type="GO" id="GO:0046348">
    <property type="term" value="P:amino sugar catabolic process"/>
    <property type="evidence" value="ECO:0007669"/>
    <property type="project" value="InterPro"/>
</dbReference>
<dbReference type="GO" id="GO:0097173">
    <property type="term" value="P:N-acetylmuramic acid catabolic process"/>
    <property type="evidence" value="ECO:0007669"/>
    <property type="project" value="UniProtKB-UniPathway"/>
</dbReference>
<dbReference type="GO" id="GO:0009254">
    <property type="term" value="P:peptidoglycan turnover"/>
    <property type="evidence" value="ECO:0007669"/>
    <property type="project" value="UniProtKB-UniRule"/>
</dbReference>
<dbReference type="CDD" id="cd05007">
    <property type="entry name" value="SIS_Etherase"/>
    <property type="match status" value="1"/>
</dbReference>
<dbReference type="FunFam" id="1.10.8.1080:FF:000001">
    <property type="entry name" value="N-acetylmuramic acid 6-phosphate etherase"/>
    <property type="match status" value="1"/>
</dbReference>
<dbReference type="FunFam" id="3.40.50.10490:FF:000014">
    <property type="entry name" value="N-acetylmuramic acid 6-phosphate etherase"/>
    <property type="match status" value="1"/>
</dbReference>
<dbReference type="Gene3D" id="1.10.8.1080">
    <property type="match status" value="1"/>
</dbReference>
<dbReference type="Gene3D" id="3.40.50.10490">
    <property type="entry name" value="Glucose-6-phosphate isomerase like protein, domain 1"/>
    <property type="match status" value="1"/>
</dbReference>
<dbReference type="HAMAP" id="MF_00068">
    <property type="entry name" value="MurQ"/>
    <property type="match status" value="1"/>
</dbReference>
<dbReference type="InterPro" id="IPR005488">
    <property type="entry name" value="Etherase_MurQ"/>
</dbReference>
<dbReference type="InterPro" id="IPR005486">
    <property type="entry name" value="Glucokinase_regulatory_CS"/>
</dbReference>
<dbReference type="InterPro" id="IPR040190">
    <property type="entry name" value="MURQ/GCKR"/>
</dbReference>
<dbReference type="InterPro" id="IPR001347">
    <property type="entry name" value="SIS_dom"/>
</dbReference>
<dbReference type="InterPro" id="IPR046348">
    <property type="entry name" value="SIS_dom_sf"/>
</dbReference>
<dbReference type="NCBIfam" id="TIGR00274">
    <property type="entry name" value="N-acetylmuramic acid 6-phosphate etherase"/>
    <property type="match status" value="1"/>
</dbReference>
<dbReference type="NCBIfam" id="NF003915">
    <property type="entry name" value="PRK05441.1"/>
    <property type="match status" value="1"/>
</dbReference>
<dbReference type="NCBIfam" id="NF009222">
    <property type="entry name" value="PRK12570.1"/>
    <property type="match status" value="1"/>
</dbReference>
<dbReference type="PANTHER" id="PTHR10088">
    <property type="entry name" value="GLUCOKINASE REGULATORY PROTEIN"/>
    <property type="match status" value="1"/>
</dbReference>
<dbReference type="PANTHER" id="PTHR10088:SF4">
    <property type="entry name" value="GLUCOKINASE REGULATORY PROTEIN"/>
    <property type="match status" value="1"/>
</dbReference>
<dbReference type="Pfam" id="PF22645">
    <property type="entry name" value="GKRP_SIS_N"/>
    <property type="match status" value="1"/>
</dbReference>
<dbReference type="SUPFAM" id="SSF53697">
    <property type="entry name" value="SIS domain"/>
    <property type="match status" value="1"/>
</dbReference>
<dbReference type="PROSITE" id="PS01272">
    <property type="entry name" value="GCKR"/>
    <property type="match status" value="1"/>
</dbReference>
<dbReference type="PROSITE" id="PS51464">
    <property type="entry name" value="SIS"/>
    <property type="match status" value="1"/>
</dbReference>
<feature type="chain" id="PRO_1000057457" description="N-acetylmuramic acid 6-phosphate etherase">
    <location>
        <begin position="1"/>
        <end position="298"/>
    </location>
</feature>
<feature type="domain" description="SIS" evidence="1">
    <location>
        <begin position="55"/>
        <end position="218"/>
    </location>
</feature>
<feature type="active site" description="Proton donor" evidence="1">
    <location>
        <position position="83"/>
    </location>
</feature>
<feature type="active site" evidence="1">
    <location>
        <position position="114"/>
    </location>
</feature>
<protein>
    <recommendedName>
        <fullName evidence="1">N-acetylmuramic acid 6-phosphate etherase</fullName>
        <shortName evidence="1">MurNAc-6-P etherase</shortName>
        <ecNumber evidence="1">4.2.1.126</ecNumber>
    </recommendedName>
    <alternativeName>
        <fullName evidence="1">N-acetylmuramic acid 6-phosphate hydrolase</fullName>
    </alternativeName>
    <alternativeName>
        <fullName evidence="1">N-acetylmuramic acid 6-phosphate lyase</fullName>
    </alternativeName>
</protein>
<keyword id="KW-0119">Carbohydrate metabolism</keyword>
<keyword id="KW-0456">Lyase</keyword>
<keyword id="KW-1185">Reference proteome</keyword>